<sequence length="452" mass="47624">MGRRYFGTDGIRGKVGDAPITPDFVLRLGYAAGKVLASAPGRAASGARPTVLIGKDTRVSGYMLEAALEAGFSAAGVDVMLAGPMPTPGVAYLTRALRLSAGVVISASHNPYHDNGIKFFSADGNKLPDEIEAEIEAWLDKPLDCAASDGLGKARRLDDAAGRYIEFCKSTFPAAFDLRGMKLVVDCAHGAAYQVAPHVFHELGADVIPIGVAPNGFNINDGVGATAPDALMRAVRANHADLGIALDGDADRLLVVDHTGRLYNGDELLYVLVKDRIATNGQVEGAVGTLMTNFAVEVALKEAGVQFVRAAVGDRYVLEQLRERGWQLGAEGSGHILSLDRHSTGDGIVSALLVLAALKRSGKTLAQMLEGVTLFPQKLINVRMKPGADWKGSEAIRRAIDSAEQALSGSGRVLIRASGTEPVLRVMVEARQATDANRHAEAIADAVKQATA</sequence>
<accession>A1V322</accession>
<protein>
    <recommendedName>
        <fullName evidence="1">Phosphoglucosamine mutase</fullName>
        <ecNumber evidence="1">5.4.2.10</ecNumber>
    </recommendedName>
</protein>
<name>GLMM_BURMS</name>
<feature type="chain" id="PRO_1000068891" description="Phosphoglucosamine mutase">
    <location>
        <begin position="1"/>
        <end position="452"/>
    </location>
</feature>
<feature type="active site" description="Phosphoserine intermediate" evidence="1">
    <location>
        <position position="108"/>
    </location>
</feature>
<feature type="binding site" description="via phosphate group" evidence="1">
    <location>
        <position position="108"/>
    </location>
    <ligand>
        <name>Mg(2+)</name>
        <dbReference type="ChEBI" id="CHEBI:18420"/>
    </ligand>
</feature>
<feature type="binding site" evidence="1">
    <location>
        <position position="247"/>
    </location>
    <ligand>
        <name>Mg(2+)</name>
        <dbReference type="ChEBI" id="CHEBI:18420"/>
    </ligand>
</feature>
<feature type="binding site" evidence="1">
    <location>
        <position position="249"/>
    </location>
    <ligand>
        <name>Mg(2+)</name>
        <dbReference type="ChEBI" id="CHEBI:18420"/>
    </ligand>
</feature>
<feature type="binding site" evidence="1">
    <location>
        <position position="251"/>
    </location>
    <ligand>
        <name>Mg(2+)</name>
        <dbReference type="ChEBI" id="CHEBI:18420"/>
    </ligand>
</feature>
<feature type="modified residue" description="Phosphoserine" evidence="1">
    <location>
        <position position="108"/>
    </location>
</feature>
<evidence type="ECO:0000255" key="1">
    <source>
        <dbReference type="HAMAP-Rule" id="MF_01554"/>
    </source>
</evidence>
<keyword id="KW-0413">Isomerase</keyword>
<keyword id="KW-0460">Magnesium</keyword>
<keyword id="KW-0479">Metal-binding</keyword>
<keyword id="KW-0597">Phosphoprotein</keyword>
<proteinExistence type="inferred from homology"/>
<organism>
    <name type="scientific">Burkholderia mallei (strain SAVP1)</name>
    <dbReference type="NCBI Taxonomy" id="320388"/>
    <lineage>
        <taxon>Bacteria</taxon>
        <taxon>Pseudomonadati</taxon>
        <taxon>Pseudomonadota</taxon>
        <taxon>Betaproteobacteria</taxon>
        <taxon>Burkholderiales</taxon>
        <taxon>Burkholderiaceae</taxon>
        <taxon>Burkholderia</taxon>
        <taxon>pseudomallei group</taxon>
    </lineage>
</organism>
<comment type="function">
    <text evidence="1">Catalyzes the conversion of glucosamine-6-phosphate to glucosamine-1-phosphate.</text>
</comment>
<comment type="catalytic activity">
    <reaction evidence="1">
        <text>alpha-D-glucosamine 1-phosphate = D-glucosamine 6-phosphate</text>
        <dbReference type="Rhea" id="RHEA:23424"/>
        <dbReference type="ChEBI" id="CHEBI:58516"/>
        <dbReference type="ChEBI" id="CHEBI:58725"/>
        <dbReference type="EC" id="5.4.2.10"/>
    </reaction>
</comment>
<comment type="cofactor">
    <cofactor evidence="1">
        <name>Mg(2+)</name>
        <dbReference type="ChEBI" id="CHEBI:18420"/>
    </cofactor>
    <text evidence="1">Binds 1 Mg(2+) ion per subunit.</text>
</comment>
<comment type="PTM">
    <text evidence="1">Activated by phosphorylation.</text>
</comment>
<comment type="similarity">
    <text evidence="1">Belongs to the phosphohexose mutase family.</text>
</comment>
<gene>
    <name evidence="1" type="primary">glmM</name>
    <name type="ordered locus">BMASAVP1_A1290</name>
</gene>
<dbReference type="EC" id="5.4.2.10" evidence="1"/>
<dbReference type="EMBL" id="CP000526">
    <property type="protein sequence ID" value="ABM52447.1"/>
    <property type="molecule type" value="Genomic_DNA"/>
</dbReference>
<dbReference type="RefSeq" id="WP_004266863.1">
    <property type="nucleotide sequence ID" value="NC_008785.1"/>
</dbReference>
<dbReference type="SMR" id="A1V322"/>
<dbReference type="GeneID" id="93059857"/>
<dbReference type="KEGG" id="bmv:BMASAVP1_A1290"/>
<dbReference type="HOGENOM" id="CLU_016950_7_0_4"/>
<dbReference type="GO" id="GO:0005829">
    <property type="term" value="C:cytosol"/>
    <property type="evidence" value="ECO:0007669"/>
    <property type="project" value="TreeGrafter"/>
</dbReference>
<dbReference type="GO" id="GO:0000287">
    <property type="term" value="F:magnesium ion binding"/>
    <property type="evidence" value="ECO:0007669"/>
    <property type="project" value="UniProtKB-UniRule"/>
</dbReference>
<dbReference type="GO" id="GO:0008966">
    <property type="term" value="F:phosphoglucosamine mutase activity"/>
    <property type="evidence" value="ECO:0007669"/>
    <property type="project" value="UniProtKB-UniRule"/>
</dbReference>
<dbReference type="GO" id="GO:0004615">
    <property type="term" value="F:phosphomannomutase activity"/>
    <property type="evidence" value="ECO:0007669"/>
    <property type="project" value="TreeGrafter"/>
</dbReference>
<dbReference type="GO" id="GO:0005975">
    <property type="term" value="P:carbohydrate metabolic process"/>
    <property type="evidence" value="ECO:0007669"/>
    <property type="project" value="InterPro"/>
</dbReference>
<dbReference type="GO" id="GO:0009252">
    <property type="term" value="P:peptidoglycan biosynthetic process"/>
    <property type="evidence" value="ECO:0007669"/>
    <property type="project" value="TreeGrafter"/>
</dbReference>
<dbReference type="GO" id="GO:0006048">
    <property type="term" value="P:UDP-N-acetylglucosamine biosynthetic process"/>
    <property type="evidence" value="ECO:0007669"/>
    <property type="project" value="TreeGrafter"/>
</dbReference>
<dbReference type="CDD" id="cd05802">
    <property type="entry name" value="GlmM"/>
    <property type="match status" value="1"/>
</dbReference>
<dbReference type="FunFam" id="3.30.310.50:FF:000001">
    <property type="entry name" value="Phosphoglucosamine mutase"/>
    <property type="match status" value="1"/>
</dbReference>
<dbReference type="FunFam" id="3.40.120.10:FF:000001">
    <property type="entry name" value="Phosphoglucosamine mutase"/>
    <property type="match status" value="1"/>
</dbReference>
<dbReference type="FunFam" id="3.40.120.10:FF:000003">
    <property type="entry name" value="Phosphoglucosamine mutase"/>
    <property type="match status" value="1"/>
</dbReference>
<dbReference type="Gene3D" id="3.40.120.10">
    <property type="entry name" value="Alpha-D-Glucose-1,6-Bisphosphate, subunit A, domain 3"/>
    <property type="match status" value="3"/>
</dbReference>
<dbReference type="Gene3D" id="3.30.310.50">
    <property type="entry name" value="Alpha-D-phosphohexomutase, C-terminal domain"/>
    <property type="match status" value="1"/>
</dbReference>
<dbReference type="HAMAP" id="MF_01554_B">
    <property type="entry name" value="GlmM_B"/>
    <property type="match status" value="1"/>
</dbReference>
<dbReference type="InterPro" id="IPR005844">
    <property type="entry name" value="A-D-PHexomutase_a/b/a-I"/>
</dbReference>
<dbReference type="InterPro" id="IPR016055">
    <property type="entry name" value="A-D-PHexomutase_a/b/a-I/II/III"/>
</dbReference>
<dbReference type="InterPro" id="IPR005845">
    <property type="entry name" value="A-D-PHexomutase_a/b/a-II"/>
</dbReference>
<dbReference type="InterPro" id="IPR005846">
    <property type="entry name" value="A-D-PHexomutase_a/b/a-III"/>
</dbReference>
<dbReference type="InterPro" id="IPR005843">
    <property type="entry name" value="A-D-PHexomutase_C"/>
</dbReference>
<dbReference type="InterPro" id="IPR036900">
    <property type="entry name" value="A-D-PHexomutase_C_sf"/>
</dbReference>
<dbReference type="InterPro" id="IPR016066">
    <property type="entry name" value="A-D-PHexomutase_CS"/>
</dbReference>
<dbReference type="InterPro" id="IPR005841">
    <property type="entry name" value="Alpha-D-phosphohexomutase_SF"/>
</dbReference>
<dbReference type="InterPro" id="IPR006352">
    <property type="entry name" value="GlmM_bact"/>
</dbReference>
<dbReference type="InterPro" id="IPR050060">
    <property type="entry name" value="Phosphoglucosamine_mutase"/>
</dbReference>
<dbReference type="NCBIfam" id="TIGR01455">
    <property type="entry name" value="glmM"/>
    <property type="match status" value="1"/>
</dbReference>
<dbReference type="NCBIfam" id="NF008139">
    <property type="entry name" value="PRK10887.1"/>
    <property type="match status" value="1"/>
</dbReference>
<dbReference type="PANTHER" id="PTHR42946:SF1">
    <property type="entry name" value="PHOSPHOGLUCOMUTASE (ALPHA-D-GLUCOSE-1,6-BISPHOSPHATE-DEPENDENT)"/>
    <property type="match status" value="1"/>
</dbReference>
<dbReference type="PANTHER" id="PTHR42946">
    <property type="entry name" value="PHOSPHOHEXOSE MUTASE"/>
    <property type="match status" value="1"/>
</dbReference>
<dbReference type="Pfam" id="PF02878">
    <property type="entry name" value="PGM_PMM_I"/>
    <property type="match status" value="1"/>
</dbReference>
<dbReference type="Pfam" id="PF02879">
    <property type="entry name" value="PGM_PMM_II"/>
    <property type="match status" value="1"/>
</dbReference>
<dbReference type="Pfam" id="PF02880">
    <property type="entry name" value="PGM_PMM_III"/>
    <property type="match status" value="1"/>
</dbReference>
<dbReference type="Pfam" id="PF00408">
    <property type="entry name" value="PGM_PMM_IV"/>
    <property type="match status" value="1"/>
</dbReference>
<dbReference type="PRINTS" id="PR00509">
    <property type="entry name" value="PGMPMM"/>
</dbReference>
<dbReference type="SUPFAM" id="SSF55957">
    <property type="entry name" value="Phosphoglucomutase, C-terminal domain"/>
    <property type="match status" value="1"/>
</dbReference>
<dbReference type="SUPFAM" id="SSF53738">
    <property type="entry name" value="Phosphoglucomutase, first 3 domains"/>
    <property type="match status" value="3"/>
</dbReference>
<dbReference type="PROSITE" id="PS00710">
    <property type="entry name" value="PGM_PMM"/>
    <property type="match status" value="1"/>
</dbReference>
<reference key="1">
    <citation type="journal article" date="2010" name="Genome Biol. Evol.">
        <title>Continuing evolution of Burkholderia mallei through genome reduction and large-scale rearrangements.</title>
        <authorList>
            <person name="Losada L."/>
            <person name="Ronning C.M."/>
            <person name="DeShazer D."/>
            <person name="Woods D."/>
            <person name="Fedorova N."/>
            <person name="Kim H.S."/>
            <person name="Shabalina S.A."/>
            <person name="Pearson T.R."/>
            <person name="Brinkac L."/>
            <person name="Tan P."/>
            <person name="Nandi T."/>
            <person name="Crabtree J."/>
            <person name="Badger J."/>
            <person name="Beckstrom-Sternberg S."/>
            <person name="Saqib M."/>
            <person name="Schutzer S.E."/>
            <person name="Keim P."/>
            <person name="Nierman W.C."/>
        </authorList>
    </citation>
    <scope>NUCLEOTIDE SEQUENCE [LARGE SCALE GENOMIC DNA]</scope>
    <source>
        <strain>SAVP1</strain>
    </source>
</reference>